<name>SEC31_PICGU</name>
<organism>
    <name type="scientific">Meyerozyma guilliermondii (strain ATCC 6260 / CBS 566 / DSM 6381 / JCM 1539 / NBRC 10279 / NRRL Y-324)</name>
    <name type="common">Yeast</name>
    <name type="synonym">Candida guilliermondii</name>
    <dbReference type="NCBI Taxonomy" id="294746"/>
    <lineage>
        <taxon>Eukaryota</taxon>
        <taxon>Fungi</taxon>
        <taxon>Dikarya</taxon>
        <taxon>Ascomycota</taxon>
        <taxon>Saccharomycotina</taxon>
        <taxon>Pichiomycetes</taxon>
        <taxon>Debaryomycetaceae</taxon>
        <taxon>Meyerozyma</taxon>
    </lineage>
</organism>
<comment type="function">
    <text evidence="1">Component of the coat protein complex II (COPII) which promotes the formation of transport vesicles from the endoplasmic reticulum (ER). The coat has two main functions, the physical deformation of the endoplasmic reticulum membrane into vesicles and the selection of cargo molecules (By similarity).</text>
</comment>
<comment type="subunit">
    <text evidence="1">The COPII coat is composed of at least 5 proteins: the SEC23/24 complex, the SEC13/31 complex, and the protein SAR1. SEC13 and SEC31 make a 2:2 tetramer that forms the edge element of the COPII outer coat. The tetramer self-assembles in multiple copies to form the complete polyhedral cage. Interacts (via WD 8) with SEC13 (By similarity).</text>
</comment>
<comment type="subcellular location">
    <subcellularLocation>
        <location evidence="1">Cytoplasmic vesicle</location>
        <location evidence="1">COPII-coated vesicle membrane</location>
        <topology evidence="1">Peripheral membrane protein</topology>
        <orientation evidence="1">Cytoplasmic side</orientation>
    </subcellularLocation>
    <subcellularLocation>
        <location evidence="1">Endoplasmic reticulum membrane</location>
        <topology evidence="1">Peripheral membrane protein</topology>
        <orientation evidence="1">Cytoplasmic side</orientation>
    </subcellularLocation>
</comment>
<comment type="similarity">
    <text evidence="4">Belongs to the WD repeat SEC31 family.</text>
</comment>
<reference key="1">
    <citation type="journal article" date="2009" name="Nature">
        <title>Evolution of pathogenicity and sexual reproduction in eight Candida genomes.</title>
        <authorList>
            <person name="Butler G."/>
            <person name="Rasmussen M.D."/>
            <person name="Lin M.F."/>
            <person name="Santos M.A.S."/>
            <person name="Sakthikumar S."/>
            <person name="Munro C.A."/>
            <person name="Rheinbay E."/>
            <person name="Grabherr M."/>
            <person name="Forche A."/>
            <person name="Reedy J.L."/>
            <person name="Agrafioti I."/>
            <person name="Arnaud M.B."/>
            <person name="Bates S."/>
            <person name="Brown A.J.P."/>
            <person name="Brunke S."/>
            <person name="Costanzo M.C."/>
            <person name="Fitzpatrick D.A."/>
            <person name="de Groot P.W.J."/>
            <person name="Harris D."/>
            <person name="Hoyer L.L."/>
            <person name="Hube B."/>
            <person name="Klis F.M."/>
            <person name="Kodira C."/>
            <person name="Lennard N."/>
            <person name="Logue M.E."/>
            <person name="Martin R."/>
            <person name="Neiman A.M."/>
            <person name="Nikolaou E."/>
            <person name="Quail M.A."/>
            <person name="Quinn J."/>
            <person name="Santos M.C."/>
            <person name="Schmitzberger F.F."/>
            <person name="Sherlock G."/>
            <person name="Shah P."/>
            <person name="Silverstein K.A.T."/>
            <person name="Skrzypek M.S."/>
            <person name="Soll D."/>
            <person name="Staggs R."/>
            <person name="Stansfield I."/>
            <person name="Stumpf M.P.H."/>
            <person name="Sudbery P.E."/>
            <person name="Srikantha T."/>
            <person name="Zeng Q."/>
            <person name="Berman J."/>
            <person name="Berriman M."/>
            <person name="Heitman J."/>
            <person name="Gow N.A.R."/>
            <person name="Lorenz M.C."/>
            <person name="Birren B.W."/>
            <person name="Kellis M."/>
            <person name="Cuomo C.A."/>
        </authorList>
    </citation>
    <scope>NUCLEOTIDE SEQUENCE [LARGE SCALE GENOMIC DNA]</scope>
    <source>
        <strain>ATCC 6260 / CBS 566 / DSM 6381 / JCM 1539 / NBRC 10279 / NRRL Y-324</strain>
    </source>
</reference>
<gene>
    <name type="primary">SEC31</name>
    <name type="ORF">PGUG_00530</name>
</gene>
<proteinExistence type="inferred from homology"/>
<feature type="chain" id="PRO_0000295444" description="Protein transport protein SEC31">
    <location>
        <begin position="1"/>
        <end position="1266"/>
    </location>
</feature>
<feature type="repeat" description="WD 1">
    <location>
        <begin position="5"/>
        <end position="45"/>
    </location>
</feature>
<feature type="repeat" description="WD 2">
    <location>
        <begin position="60"/>
        <end position="104"/>
    </location>
</feature>
<feature type="repeat" description="WD 3">
    <location>
        <begin position="115"/>
        <end position="155"/>
    </location>
</feature>
<feature type="repeat" description="WD 4">
    <location>
        <begin position="161"/>
        <end position="201"/>
    </location>
</feature>
<feature type="repeat" description="WD 5">
    <location>
        <begin position="203"/>
        <end position="246"/>
    </location>
</feature>
<feature type="repeat" description="WD 6">
    <location>
        <begin position="250"/>
        <end position="290"/>
    </location>
</feature>
<feature type="repeat" description="WD 7">
    <location>
        <begin position="293"/>
        <end position="333"/>
    </location>
</feature>
<feature type="repeat" description="WD 8; interaction with SEC13" evidence="2">
    <location>
        <begin position="374"/>
        <end position="397"/>
    </location>
</feature>
<feature type="region of interest" description="Disordered" evidence="3">
    <location>
        <begin position="463"/>
        <end position="492"/>
    </location>
</feature>
<feature type="region of interest" description="Disordered" evidence="3">
    <location>
        <begin position="760"/>
        <end position="1157"/>
    </location>
</feature>
<feature type="compositionally biased region" description="Basic and acidic residues" evidence="3">
    <location>
        <begin position="463"/>
        <end position="475"/>
    </location>
</feature>
<feature type="compositionally biased region" description="Low complexity" evidence="3">
    <location>
        <begin position="774"/>
        <end position="789"/>
    </location>
</feature>
<feature type="compositionally biased region" description="Polar residues" evidence="3">
    <location>
        <begin position="826"/>
        <end position="838"/>
    </location>
</feature>
<feature type="compositionally biased region" description="Pro residues" evidence="3">
    <location>
        <begin position="883"/>
        <end position="907"/>
    </location>
</feature>
<feature type="compositionally biased region" description="Low complexity" evidence="3">
    <location>
        <begin position="930"/>
        <end position="948"/>
    </location>
</feature>
<feature type="compositionally biased region" description="Low complexity" evidence="3">
    <location>
        <begin position="968"/>
        <end position="990"/>
    </location>
</feature>
<feature type="compositionally biased region" description="Polar residues" evidence="3">
    <location>
        <begin position="1000"/>
        <end position="1017"/>
    </location>
</feature>
<feature type="compositionally biased region" description="Polar residues" evidence="3">
    <location>
        <begin position="1031"/>
        <end position="1043"/>
    </location>
</feature>
<feature type="compositionally biased region" description="Low complexity" evidence="3">
    <location>
        <begin position="1044"/>
        <end position="1057"/>
    </location>
</feature>
<feature type="compositionally biased region" description="Pro residues" evidence="3">
    <location>
        <begin position="1068"/>
        <end position="1078"/>
    </location>
</feature>
<feature type="compositionally biased region" description="Pro residues" evidence="3">
    <location>
        <begin position="1110"/>
        <end position="1125"/>
    </location>
</feature>
<evidence type="ECO:0000250" key="1"/>
<evidence type="ECO:0000255" key="2">
    <source>
        <dbReference type="PROSITE-ProRule" id="PRU00221"/>
    </source>
</evidence>
<evidence type="ECO:0000256" key="3">
    <source>
        <dbReference type="SAM" id="MobiDB-lite"/>
    </source>
</evidence>
<evidence type="ECO:0000305" key="4"/>
<sequence length="1266" mass="135234">MKIEEISKTSTFAWNNDPLPLLASGTVAGAVDADFSTSSSLEIWDIFSATNSKDPIFSASVDNRFYAIAWSKPSEGRSKGVLAGAFENGTIELWDVQELITSKDLQKASIFKSSAHSGPVKTLQFNPLQEHVLLSGGSNGQIFVWDTKKLSDPVAPGKAMTPMDEISCVSWNNSVSHIFATTGNSGYTSIWDLKSKREVLHLSYSANFSCVAWHPTQSTKLVTATGNDSDALILTWDLKNANAPEKIMRGHKKGILSLDWCKQDPEILISSGKDNATMLWNPIKGEKLGEYPTTANWAFHTRFAPAAPEIFATASFDGKIVIQSLQDTSPPMTSKVTTKNDNDFWNEISTTETQQPVFTVHQAPAWLKRTSSVSFGFGSKLVSISLDSDSHSVVKIQPFVKNGAVSETTSKFSQALKSNDFKDIIEARISDARHSKTDKADWEILSKLSGVGKEGFLKEIVSTEHEQANGKKPDVSSEDGTEPSRKEEGDNDFFEQLGESPIKSIPNFVPEGKFSIDTSDQSEADKTIIKLLLSNKIEDAISACLDQKKLSAALVLALDASPESKAKVRNAYFTNTKGDEIARLIYNASSKNITDIVANADVKSWKEIAAAIAAFSTDESDLSSKITELGDRIVQASENPSTEDRNNAMICYLAGNALEKIASIWLRELPEYEKSLLESPDDDVSTPSDAHFKSLNNFMEKLLAYRSITKANDTLGGPSIEPICNAILEYANLVAGYGQFELADSFLQLLPSDFAGLKTEKDRISRASGTKVQASNTRSTTSKATASRSYGKSPVPGASVPPTLPGNQTFAPAASTPYGGLAGQPAASSVLTPATPSFPSMPQPPQAPVSNRPPIASTPSIYGKPAPVGNPYAPQGATAFNPYKPPAPVAPEPVSAPPPAVSGPPKPAYRQETEGWNDLPDAFKQKTSTRRAAPAAVVSPSLSPALPANNFAPPKRNSAVAGPPPKGSRSSSRTAVPTIPTAASPSASTAQLHSRYAPPQSFNAPTEVSNGSGSPTPSVHAPPKNPYAPAATSSTNLPRNQYAPSVPTPSVQQPQTPKIGHASATPSGPSPNGPPKNPYAPTAQQVSMSPSGMVPPRTGSYGAAPSGVTAPPPPKVGGVLPPPGPVLTQPRSRNASAAAPVELTPPPTKPKYPAGDRSHIPEKSIQIYTSLDSLTQAVKPNVPERFIKHAEDMEKRLNFLYDHLNNDDLLSDDAIAELKKVCSAVEAKDYATATQLNVDFATNHSEQTGKWYPGLKRLISMAEATL</sequence>
<dbReference type="EMBL" id="CH408155">
    <property type="protein sequence ID" value="EDK36432.2"/>
    <property type="molecule type" value="Genomic_DNA"/>
</dbReference>
<dbReference type="RefSeq" id="XP_001487153.1">
    <property type="nucleotide sequence ID" value="XM_001487103.1"/>
</dbReference>
<dbReference type="SMR" id="A5DB75"/>
<dbReference type="FunCoup" id="A5DB75">
    <property type="interactions" value="714"/>
</dbReference>
<dbReference type="STRING" id="294746.A5DB75"/>
<dbReference type="GeneID" id="5129691"/>
<dbReference type="KEGG" id="pgu:PGUG_00530"/>
<dbReference type="VEuPathDB" id="FungiDB:PGUG_00530"/>
<dbReference type="eggNOG" id="KOG0307">
    <property type="taxonomic scope" value="Eukaryota"/>
</dbReference>
<dbReference type="HOGENOM" id="CLU_003033_2_0_1"/>
<dbReference type="InParanoid" id="A5DB75"/>
<dbReference type="OMA" id="WLERPCG"/>
<dbReference type="OrthoDB" id="542917at2759"/>
<dbReference type="Proteomes" id="UP000001997">
    <property type="component" value="Unassembled WGS sequence"/>
</dbReference>
<dbReference type="GO" id="GO:0030127">
    <property type="term" value="C:COPII vesicle coat"/>
    <property type="evidence" value="ECO:0007669"/>
    <property type="project" value="EnsemblFungi"/>
</dbReference>
<dbReference type="GO" id="GO:0070971">
    <property type="term" value="C:endoplasmic reticulum exit site"/>
    <property type="evidence" value="ECO:0007669"/>
    <property type="project" value="TreeGrafter"/>
</dbReference>
<dbReference type="GO" id="GO:0005789">
    <property type="term" value="C:endoplasmic reticulum membrane"/>
    <property type="evidence" value="ECO:0007669"/>
    <property type="project" value="UniProtKB-SubCell"/>
</dbReference>
<dbReference type="GO" id="GO:0005198">
    <property type="term" value="F:structural molecule activity"/>
    <property type="evidence" value="ECO:0007669"/>
    <property type="project" value="EnsemblFungi"/>
</dbReference>
<dbReference type="GO" id="GO:0090110">
    <property type="term" value="P:COPII-coated vesicle cargo loading"/>
    <property type="evidence" value="ECO:0007669"/>
    <property type="project" value="TreeGrafter"/>
</dbReference>
<dbReference type="GO" id="GO:0007029">
    <property type="term" value="P:endoplasmic reticulum organization"/>
    <property type="evidence" value="ECO:0007669"/>
    <property type="project" value="TreeGrafter"/>
</dbReference>
<dbReference type="GO" id="GO:1902953">
    <property type="term" value="P:positive regulation of ER to Golgi vesicle-mediated transport"/>
    <property type="evidence" value="ECO:0007669"/>
    <property type="project" value="EnsemblFungi"/>
</dbReference>
<dbReference type="GO" id="GO:0070863">
    <property type="term" value="P:positive regulation of protein exit from endoplasmic reticulum"/>
    <property type="evidence" value="ECO:0007669"/>
    <property type="project" value="EnsemblFungi"/>
</dbReference>
<dbReference type="GO" id="GO:0015031">
    <property type="term" value="P:protein transport"/>
    <property type="evidence" value="ECO:0007669"/>
    <property type="project" value="UniProtKB-KW"/>
</dbReference>
<dbReference type="FunFam" id="2.130.10.10:FF:000526">
    <property type="entry name" value="Protein transport protein SEC31"/>
    <property type="match status" value="1"/>
</dbReference>
<dbReference type="Gene3D" id="1.25.40.1030">
    <property type="match status" value="1"/>
</dbReference>
<dbReference type="Gene3D" id="1.20.940.10">
    <property type="entry name" value="Functional domain of the splicing factor Prp18"/>
    <property type="match status" value="1"/>
</dbReference>
<dbReference type="Gene3D" id="2.130.10.10">
    <property type="entry name" value="YVTN repeat-like/Quinoprotein amine dehydrogenase"/>
    <property type="match status" value="1"/>
</dbReference>
<dbReference type="InterPro" id="IPR040251">
    <property type="entry name" value="SEC31-like"/>
</dbReference>
<dbReference type="InterPro" id="IPR015943">
    <property type="entry name" value="WD40/YVTN_repeat-like_dom_sf"/>
</dbReference>
<dbReference type="InterPro" id="IPR036322">
    <property type="entry name" value="WD40_repeat_dom_sf"/>
</dbReference>
<dbReference type="InterPro" id="IPR001680">
    <property type="entry name" value="WD40_rpt"/>
</dbReference>
<dbReference type="PANTHER" id="PTHR13923">
    <property type="entry name" value="SEC31-RELATED PROTEIN"/>
    <property type="match status" value="1"/>
</dbReference>
<dbReference type="PANTHER" id="PTHR13923:SF11">
    <property type="entry name" value="SECRETORY 31, ISOFORM D"/>
    <property type="match status" value="1"/>
</dbReference>
<dbReference type="Pfam" id="PF00400">
    <property type="entry name" value="WD40"/>
    <property type="match status" value="2"/>
</dbReference>
<dbReference type="SMART" id="SM00320">
    <property type="entry name" value="WD40"/>
    <property type="match status" value="6"/>
</dbReference>
<dbReference type="SUPFAM" id="SSF50978">
    <property type="entry name" value="WD40 repeat-like"/>
    <property type="match status" value="1"/>
</dbReference>
<dbReference type="PROSITE" id="PS00678">
    <property type="entry name" value="WD_REPEATS_1"/>
    <property type="match status" value="2"/>
</dbReference>
<dbReference type="PROSITE" id="PS50082">
    <property type="entry name" value="WD_REPEATS_2"/>
    <property type="match status" value="2"/>
</dbReference>
<dbReference type="PROSITE" id="PS50294">
    <property type="entry name" value="WD_REPEATS_REGION"/>
    <property type="match status" value="1"/>
</dbReference>
<accession>A5DB75</accession>
<keyword id="KW-0968">Cytoplasmic vesicle</keyword>
<keyword id="KW-0256">Endoplasmic reticulum</keyword>
<keyword id="KW-0931">ER-Golgi transport</keyword>
<keyword id="KW-0472">Membrane</keyword>
<keyword id="KW-0653">Protein transport</keyword>
<keyword id="KW-1185">Reference proteome</keyword>
<keyword id="KW-0677">Repeat</keyword>
<keyword id="KW-0813">Transport</keyword>
<keyword id="KW-0853">WD repeat</keyword>
<protein>
    <recommendedName>
        <fullName>Protein transport protein SEC31</fullName>
    </recommendedName>
</protein>